<reference key="1">
    <citation type="submission" date="2008-10" db="EMBL/GenBank/DDBJ databases">
        <title>The complete genome sequence of Helicobacter pylori strain P12.</title>
        <authorList>
            <person name="Fischer W."/>
            <person name="Windhager L."/>
            <person name="Karnholz A."/>
            <person name="Zeiller M."/>
            <person name="Zimmer R."/>
            <person name="Haas R."/>
        </authorList>
    </citation>
    <scope>NUCLEOTIDE SEQUENCE [LARGE SCALE GENOMIC DNA]</scope>
    <source>
        <strain>P12</strain>
    </source>
</reference>
<gene>
    <name type="ordered locus">HPP12_1301</name>
</gene>
<sequence length="148" mass="17169">MDTHNKDDSIIRFSVSLQQNLLDELDNRIIKNGYSSRSELVRDLIREKLVEDNWAEDNPNDESKIAVLVVIYDHHQRELNQRMIDIQHASGTHVLCTTHIHMDEHNCLETIILQGNSFEIQRLQLEIGGLRGVKFAKLTKASSFEYNE</sequence>
<accession>B6JNH5</accession>
<evidence type="ECO:0000255" key="1">
    <source>
        <dbReference type="HAMAP-Rule" id="MF_00476"/>
    </source>
</evidence>
<dbReference type="EMBL" id="CP001217">
    <property type="protein sequence ID" value="ACJ08453.1"/>
    <property type="molecule type" value="Genomic_DNA"/>
</dbReference>
<dbReference type="SMR" id="B6JNH5"/>
<dbReference type="KEGG" id="hpp:HPP12_1301"/>
<dbReference type="HOGENOM" id="CLU_113319_1_0_7"/>
<dbReference type="Proteomes" id="UP000008198">
    <property type="component" value="Chromosome"/>
</dbReference>
<dbReference type="GO" id="GO:0003677">
    <property type="term" value="F:DNA binding"/>
    <property type="evidence" value="ECO:0007669"/>
    <property type="project" value="UniProtKB-KW"/>
</dbReference>
<dbReference type="GO" id="GO:0003700">
    <property type="term" value="F:DNA-binding transcription factor activity"/>
    <property type="evidence" value="ECO:0007669"/>
    <property type="project" value="UniProtKB-UniRule"/>
</dbReference>
<dbReference type="GO" id="GO:0016151">
    <property type="term" value="F:nickel cation binding"/>
    <property type="evidence" value="ECO:0007669"/>
    <property type="project" value="UniProtKB-UniRule"/>
</dbReference>
<dbReference type="GO" id="GO:0010045">
    <property type="term" value="P:response to nickel cation"/>
    <property type="evidence" value="ECO:0007669"/>
    <property type="project" value="InterPro"/>
</dbReference>
<dbReference type="CDD" id="cd22231">
    <property type="entry name" value="RHH_NikR_HicB-like"/>
    <property type="match status" value="1"/>
</dbReference>
<dbReference type="FunFam" id="1.10.1220.10:FF:000010">
    <property type="entry name" value="Putative nickel-responsive regulator"/>
    <property type="match status" value="1"/>
</dbReference>
<dbReference type="FunFam" id="3.30.70.1150:FF:000004">
    <property type="entry name" value="Putative nickel-responsive regulator"/>
    <property type="match status" value="1"/>
</dbReference>
<dbReference type="Gene3D" id="3.30.70.1150">
    <property type="entry name" value="ACT-like. Chain A, domain 2"/>
    <property type="match status" value="1"/>
</dbReference>
<dbReference type="Gene3D" id="1.10.1220.10">
    <property type="entry name" value="Met repressor-like"/>
    <property type="match status" value="1"/>
</dbReference>
<dbReference type="HAMAP" id="MF_00476">
    <property type="entry name" value="NikR"/>
    <property type="match status" value="1"/>
</dbReference>
<dbReference type="InterPro" id="IPR027271">
    <property type="entry name" value="Acetolactate_synth/TF_NikR_C"/>
</dbReference>
<dbReference type="InterPro" id="IPR045865">
    <property type="entry name" value="ACT-like_dom_sf"/>
</dbReference>
<dbReference type="InterPro" id="IPR013321">
    <property type="entry name" value="Arc_rbn_hlx_hlx"/>
</dbReference>
<dbReference type="InterPro" id="IPR002145">
    <property type="entry name" value="CopG"/>
</dbReference>
<dbReference type="InterPro" id="IPR050192">
    <property type="entry name" value="CopG/NikR_regulator"/>
</dbReference>
<dbReference type="InterPro" id="IPR022988">
    <property type="entry name" value="Ni_resp_reg_NikR"/>
</dbReference>
<dbReference type="InterPro" id="IPR010985">
    <property type="entry name" value="Ribbon_hlx_hlx"/>
</dbReference>
<dbReference type="InterPro" id="IPR014864">
    <property type="entry name" value="TF_NikR_Ni-bd_C"/>
</dbReference>
<dbReference type="NCBIfam" id="NF001884">
    <property type="entry name" value="PRK00630.1"/>
    <property type="match status" value="1"/>
</dbReference>
<dbReference type="NCBIfam" id="NF002169">
    <property type="entry name" value="PRK01002.1"/>
    <property type="match status" value="1"/>
</dbReference>
<dbReference type="NCBIfam" id="NF002815">
    <property type="entry name" value="PRK02967.1"/>
    <property type="match status" value="1"/>
</dbReference>
<dbReference type="NCBIfam" id="NF003381">
    <property type="entry name" value="PRK04460.1"/>
    <property type="match status" value="1"/>
</dbReference>
<dbReference type="PANTHER" id="PTHR34719">
    <property type="entry name" value="NICKEL-RESPONSIVE REGULATOR"/>
    <property type="match status" value="1"/>
</dbReference>
<dbReference type="PANTHER" id="PTHR34719:SF2">
    <property type="entry name" value="NICKEL-RESPONSIVE REGULATOR"/>
    <property type="match status" value="1"/>
</dbReference>
<dbReference type="Pfam" id="PF08753">
    <property type="entry name" value="NikR_C"/>
    <property type="match status" value="1"/>
</dbReference>
<dbReference type="Pfam" id="PF01402">
    <property type="entry name" value="RHH_1"/>
    <property type="match status" value="1"/>
</dbReference>
<dbReference type="SUPFAM" id="SSF55021">
    <property type="entry name" value="ACT-like"/>
    <property type="match status" value="1"/>
</dbReference>
<dbReference type="SUPFAM" id="SSF47598">
    <property type="entry name" value="Ribbon-helix-helix"/>
    <property type="match status" value="1"/>
</dbReference>
<name>NIKR_HELP2</name>
<keyword id="KW-0238">DNA-binding</keyword>
<keyword id="KW-0479">Metal-binding</keyword>
<keyword id="KW-0533">Nickel</keyword>
<keyword id="KW-0804">Transcription</keyword>
<keyword id="KW-0805">Transcription regulation</keyword>
<comment type="function">
    <text evidence="1">Transcriptional regulator.</text>
</comment>
<comment type="cofactor">
    <cofactor evidence="1">
        <name>Ni(2+)</name>
        <dbReference type="ChEBI" id="CHEBI:49786"/>
    </cofactor>
    <text evidence="1">Binds 1 nickel ion per subunit.</text>
</comment>
<comment type="similarity">
    <text evidence="1">Belongs to the transcriptional regulatory CopG/NikR family.</text>
</comment>
<organism>
    <name type="scientific">Helicobacter pylori (strain P12)</name>
    <dbReference type="NCBI Taxonomy" id="570508"/>
    <lineage>
        <taxon>Bacteria</taxon>
        <taxon>Pseudomonadati</taxon>
        <taxon>Campylobacterota</taxon>
        <taxon>Epsilonproteobacteria</taxon>
        <taxon>Campylobacterales</taxon>
        <taxon>Helicobacteraceae</taxon>
        <taxon>Helicobacter</taxon>
    </lineage>
</organism>
<feature type="chain" id="PRO_1000125828" description="Putative nickel-responsive regulator">
    <location>
        <begin position="1"/>
        <end position="148"/>
    </location>
</feature>
<feature type="binding site" evidence="1">
    <location>
        <position position="88"/>
    </location>
    <ligand>
        <name>Ni(2+)</name>
        <dbReference type="ChEBI" id="CHEBI:49786"/>
    </ligand>
</feature>
<feature type="binding site" evidence="1">
    <location>
        <position position="99"/>
    </location>
    <ligand>
        <name>Ni(2+)</name>
        <dbReference type="ChEBI" id="CHEBI:49786"/>
    </ligand>
</feature>
<feature type="binding site" evidence="1">
    <location>
        <position position="101"/>
    </location>
    <ligand>
        <name>Ni(2+)</name>
        <dbReference type="ChEBI" id="CHEBI:49786"/>
    </ligand>
</feature>
<feature type="binding site" evidence="1">
    <location>
        <position position="107"/>
    </location>
    <ligand>
        <name>Ni(2+)</name>
        <dbReference type="ChEBI" id="CHEBI:49786"/>
    </ligand>
</feature>
<protein>
    <recommendedName>
        <fullName evidence="1">Putative nickel-responsive regulator</fullName>
    </recommendedName>
</protein>
<proteinExistence type="inferred from homology"/>